<sequence length="397" mass="42699">MKKLTIKDIDLSNKAVIMRVDFNVPIGKDGKVSDDTRITAALPTIKYAVEKKAKVILLSHLGRPKGSFDPKYSLKPIAEHLKNISGLNVIFVPHVVGEEVKEAVKNMKVGDVLLLENTRFHPGEEKNDQELAKAWAELADIHVNDAFGTAHRAHASNVGIANFIPSVAGFLMEKEIDFLNKVTYEPDHPYVVVLGGAKVSDKIGVITNLLNKADKLLIGGAMMFTFLKAQGLKVGSSLVENDKLDLAKQILEQAKEKKVEIVLPVDAIVAQKIEAGVEKKTADLKDGIDDGWMGLDIGPKTIKVFEEALKNAKTVVWNGPMGVFEIEDFAGGTKAVAEMIAKIKGTTVIGGGDSAAAVAKFGLESAYSHVSTGGGASLEFLEGKDLPGIRSIADKKK</sequence>
<organism>
    <name type="scientific">Pseudothermotoga lettingae (strain ATCC BAA-301 / DSM 14385 / NBRC 107922 / TMO)</name>
    <name type="common">Thermotoga lettingae</name>
    <dbReference type="NCBI Taxonomy" id="416591"/>
    <lineage>
        <taxon>Bacteria</taxon>
        <taxon>Thermotogati</taxon>
        <taxon>Thermotogota</taxon>
        <taxon>Thermotogae</taxon>
        <taxon>Thermotogales</taxon>
        <taxon>Thermotogaceae</taxon>
        <taxon>Pseudothermotoga</taxon>
    </lineage>
</organism>
<reference key="1">
    <citation type="submission" date="2007-08" db="EMBL/GenBank/DDBJ databases">
        <title>Complete sequence of Thermotoga lettingae TMO.</title>
        <authorList>
            <consortium name="US DOE Joint Genome Institute"/>
            <person name="Copeland A."/>
            <person name="Lucas S."/>
            <person name="Lapidus A."/>
            <person name="Barry K."/>
            <person name="Glavina del Rio T."/>
            <person name="Dalin E."/>
            <person name="Tice H."/>
            <person name="Pitluck S."/>
            <person name="Foster B."/>
            <person name="Bruce D."/>
            <person name="Schmutz J."/>
            <person name="Larimer F."/>
            <person name="Land M."/>
            <person name="Hauser L."/>
            <person name="Kyrpides N."/>
            <person name="Mikhailova N."/>
            <person name="Nelson K."/>
            <person name="Gogarten J.P."/>
            <person name="Noll K."/>
            <person name="Richardson P."/>
        </authorList>
    </citation>
    <scope>NUCLEOTIDE SEQUENCE [LARGE SCALE GENOMIC DNA]</scope>
    <source>
        <strain>ATCC BAA-301 / DSM 14385 / NBRC 107922 / TMO</strain>
    </source>
</reference>
<evidence type="ECO:0000255" key="1">
    <source>
        <dbReference type="HAMAP-Rule" id="MF_00145"/>
    </source>
</evidence>
<feature type="chain" id="PRO_1000058084" description="Phosphoglycerate kinase">
    <location>
        <begin position="1"/>
        <end position="397"/>
    </location>
</feature>
<feature type="binding site" evidence="1">
    <location>
        <begin position="21"/>
        <end position="23"/>
    </location>
    <ligand>
        <name>substrate</name>
    </ligand>
</feature>
<feature type="binding site" evidence="1">
    <location>
        <position position="37"/>
    </location>
    <ligand>
        <name>substrate</name>
    </ligand>
</feature>
<feature type="binding site" evidence="1">
    <location>
        <begin position="60"/>
        <end position="63"/>
    </location>
    <ligand>
        <name>substrate</name>
    </ligand>
</feature>
<feature type="binding site" evidence="1">
    <location>
        <position position="119"/>
    </location>
    <ligand>
        <name>substrate</name>
    </ligand>
</feature>
<feature type="binding site" evidence="1">
    <location>
        <position position="152"/>
    </location>
    <ligand>
        <name>substrate</name>
    </ligand>
</feature>
<feature type="binding site" evidence="1">
    <location>
        <position position="202"/>
    </location>
    <ligand>
        <name>ATP</name>
        <dbReference type="ChEBI" id="CHEBI:30616"/>
    </ligand>
</feature>
<feature type="binding site" evidence="1">
    <location>
        <position position="294"/>
    </location>
    <ligand>
        <name>ATP</name>
        <dbReference type="ChEBI" id="CHEBI:30616"/>
    </ligand>
</feature>
<feature type="binding site" evidence="1">
    <location>
        <position position="325"/>
    </location>
    <ligand>
        <name>ATP</name>
        <dbReference type="ChEBI" id="CHEBI:30616"/>
    </ligand>
</feature>
<feature type="binding site" evidence="1">
    <location>
        <begin position="351"/>
        <end position="354"/>
    </location>
    <ligand>
        <name>ATP</name>
        <dbReference type="ChEBI" id="CHEBI:30616"/>
    </ligand>
</feature>
<proteinExistence type="inferred from homology"/>
<comment type="catalytic activity">
    <reaction evidence="1">
        <text>(2R)-3-phosphoglycerate + ATP = (2R)-3-phospho-glyceroyl phosphate + ADP</text>
        <dbReference type="Rhea" id="RHEA:14801"/>
        <dbReference type="ChEBI" id="CHEBI:30616"/>
        <dbReference type="ChEBI" id="CHEBI:57604"/>
        <dbReference type="ChEBI" id="CHEBI:58272"/>
        <dbReference type="ChEBI" id="CHEBI:456216"/>
        <dbReference type="EC" id="2.7.2.3"/>
    </reaction>
</comment>
<comment type="pathway">
    <text evidence="1">Carbohydrate degradation; glycolysis; pyruvate from D-glyceraldehyde 3-phosphate: step 2/5.</text>
</comment>
<comment type="subunit">
    <text evidence="1">Monomer.</text>
</comment>
<comment type="subcellular location">
    <subcellularLocation>
        <location evidence="1">Cytoplasm</location>
    </subcellularLocation>
</comment>
<comment type="similarity">
    <text evidence="1">Belongs to the phosphoglycerate kinase family.</text>
</comment>
<accession>A8F5X9</accession>
<gene>
    <name evidence="1" type="primary">pgk</name>
    <name type="ordered locus">Tlet_0997</name>
</gene>
<protein>
    <recommendedName>
        <fullName evidence="1">Phosphoglycerate kinase</fullName>
        <ecNumber evidence="1">2.7.2.3</ecNumber>
    </recommendedName>
</protein>
<name>PGK_PSELT</name>
<keyword id="KW-0067">ATP-binding</keyword>
<keyword id="KW-0963">Cytoplasm</keyword>
<keyword id="KW-0324">Glycolysis</keyword>
<keyword id="KW-0418">Kinase</keyword>
<keyword id="KW-0547">Nucleotide-binding</keyword>
<keyword id="KW-1185">Reference proteome</keyword>
<keyword id="KW-0808">Transferase</keyword>
<dbReference type="EC" id="2.7.2.3" evidence="1"/>
<dbReference type="EMBL" id="CP000812">
    <property type="protein sequence ID" value="ABV33563.1"/>
    <property type="molecule type" value="Genomic_DNA"/>
</dbReference>
<dbReference type="RefSeq" id="WP_012003044.1">
    <property type="nucleotide sequence ID" value="NZ_BSDV01000001.1"/>
</dbReference>
<dbReference type="SMR" id="A8F5X9"/>
<dbReference type="STRING" id="416591.Tlet_0997"/>
<dbReference type="KEGG" id="tle:Tlet_0997"/>
<dbReference type="eggNOG" id="COG0126">
    <property type="taxonomic scope" value="Bacteria"/>
</dbReference>
<dbReference type="HOGENOM" id="CLU_025427_0_2_0"/>
<dbReference type="OrthoDB" id="9808460at2"/>
<dbReference type="UniPathway" id="UPA00109">
    <property type="reaction ID" value="UER00185"/>
</dbReference>
<dbReference type="Proteomes" id="UP000002016">
    <property type="component" value="Chromosome"/>
</dbReference>
<dbReference type="GO" id="GO:0005829">
    <property type="term" value="C:cytosol"/>
    <property type="evidence" value="ECO:0007669"/>
    <property type="project" value="TreeGrafter"/>
</dbReference>
<dbReference type="GO" id="GO:0043531">
    <property type="term" value="F:ADP binding"/>
    <property type="evidence" value="ECO:0007669"/>
    <property type="project" value="TreeGrafter"/>
</dbReference>
<dbReference type="GO" id="GO:0005524">
    <property type="term" value="F:ATP binding"/>
    <property type="evidence" value="ECO:0007669"/>
    <property type="project" value="UniProtKB-KW"/>
</dbReference>
<dbReference type="GO" id="GO:0004618">
    <property type="term" value="F:phosphoglycerate kinase activity"/>
    <property type="evidence" value="ECO:0007669"/>
    <property type="project" value="UniProtKB-UniRule"/>
</dbReference>
<dbReference type="GO" id="GO:0006094">
    <property type="term" value="P:gluconeogenesis"/>
    <property type="evidence" value="ECO:0007669"/>
    <property type="project" value="TreeGrafter"/>
</dbReference>
<dbReference type="GO" id="GO:0006096">
    <property type="term" value="P:glycolytic process"/>
    <property type="evidence" value="ECO:0007669"/>
    <property type="project" value="UniProtKB-UniRule"/>
</dbReference>
<dbReference type="CDD" id="cd00318">
    <property type="entry name" value="Phosphoglycerate_kinase"/>
    <property type="match status" value="1"/>
</dbReference>
<dbReference type="FunFam" id="3.40.50.1260:FF:000003">
    <property type="entry name" value="Phosphoglycerate kinase"/>
    <property type="match status" value="1"/>
</dbReference>
<dbReference type="FunFam" id="3.40.50.1260:FF:000006">
    <property type="entry name" value="Phosphoglycerate kinase"/>
    <property type="match status" value="1"/>
</dbReference>
<dbReference type="Gene3D" id="3.40.50.1260">
    <property type="entry name" value="Phosphoglycerate kinase, N-terminal domain"/>
    <property type="match status" value="2"/>
</dbReference>
<dbReference type="HAMAP" id="MF_00145">
    <property type="entry name" value="Phosphoglyc_kinase"/>
    <property type="match status" value="1"/>
</dbReference>
<dbReference type="InterPro" id="IPR001576">
    <property type="entry name" value="Phosphoglycerate_kinase"/>
</dbReference>
<dbReference type="InterPro" id="IPR015824">
    <property type="entry name" value="Phosphoglycerate_kinase_N"/>
</dbReference>
<dbReference type="InterPro" id="IPR036043">
    <property type="entry name" value="Phosphoglycerate_kinase_sf"/>
</dbReference>
<dbReference type="PANTHER" id="PTHR11406">
    <property type="entry name" value="PHOSPHOGLYCERATE KINASE"/>
    <property type="match status" value="1"/>
</dbReference>
<dbReference type="PANTHER" id="PTHR11406:SF23">
    <property type="entry name" value="PHOSPHOGLYCERATE KINASE 1, CHLOROPLASTIC-RELATED"/>
    <property type="match status" value="1"/>
</dbReference>
<dbReference type="Pfam" id="PF00162">
    <property type="entry name" value="PGK"/>
    <property type="match status" value="1"/>
</dbReference>
<dbReference type="PIRSF" id="PIRSF000724">
    <property type="entry name" value="Pgk"/>
    <property type="match status" value="1"/>
</dbReference>
<dbReference type="PRINTS" id="PR00477">
    <property type="entry name" value="PHGLYCKINASE"/>
</dbReference>
<dbReference type="SUPFAM" id="SSF53748">
    <property type="entry name" value="Phosphoglycerate kinase"/>
    <property type="match status" value="1"/>
</dbReference>